<feature type="chain" id="PRO_0000410393" description="High osmolarity signaling protein SHO1">
    <location>
        <begin position="1"/>
        <end position="273"/>
    </location>
</feature>
<feature type="topological domain" description="Cytoplasmic" evidence="2">
    <location>
        <begin position="1"/>
        <end position="27"/>
    </location>
</feature>
<feature type="transmembrane region" description="Helical" evidence="2">
    <location>
        <begin position="28"/>
        <end position="48"/>
    </location>
</feature>
<feature type="topological domain" description="Extracellular" evidence="2">
    <location>
        <begin position="49"/>
        <end position="59"/>
    </location>
</feature>
<feature type="transmembrane region" description="Helical" evidence="2">
    <location>
        <begin position="60"/>
        <end position="80"/>
    </location>
</feature>
<feature type="topological domain" description="Cytoplasmic" evidence="2">
    <location>
        <begin position="81"/>
        <end position="89"/>
    </location>
</feature>
<feature type="transmembrane region" description="Helical" evidence="2">
    <location>
        <begin position="90"/>
        <end position="110"/>
    </location>
</feature>
<feature type="topological domain" description="Extracellular" evidence="2">
    <location>
        <begin position="111"/>
        <end position="117"/>
    </location>
</feature>
<feature type="transmembrane region" description="Helical" evidence="2">
    <location>
        <begin position="118"/>
        <end position="138"/>
    </location>
</feature>
<feature type="topological domain" description="Cytoplasmic" evidence="2">
    <location>
        <begin position="139"/>
        <end position="273"/>
    </location>
</feature>
<feature type="domain" description="SH3" evidence="3">
    <location>
        <begin position="213"/>
        <end position="273"/>
    </location>
</feature>
<feature type="glycosylation site" description="N-linked (GlcNAc...) asparagine" evidence="2">
    <location>
        <position position="112"/>
    </location>
</feature>
<proteinExistence type="inferred from homology"/>
<gene>
    <name type="primary">SHO1</name>
    <name type="ordered locus">PAS_chr1-3_0149</name>
</gene>
<evidence type="ECO:0000250" key="1"/>
<evidence type="ECO:0000255" key="2"/>
<evidence type="ECO:0000255" key="3">
    <source>
        <dbReference type="PROSITE-ProRule" id="PRU00192"/>
    </source>
</evidence>
<evidence type="ECO:0000305" key="4"/>
<name>SHO1_KOMPG</name>
<accession>C4QVD6</accession>
<protein>
    <recommendedName>
        <fullName>High osmolarity signaling protein SHO1</fullName>
    </recommendedName>
    <alternativeName>
        <fullName>Osmosensor SHO1</fullName>
    </alternativeName>
</protein>
<organism>
    <name type="scientific">Komagataella phaffii (strain GS115 / ATCC 20864)</name>
    <name type="common">Yeast</name>
    <name type="synonym">Pichia pastoris</name>
    <dbReference type="NCBI Taxonomy" id="644223"/>
    <lineage>
        <taxon>Eukaryota</taxon>
        <taxon>Fungi</taxon>
        <taxon>Dikarya</taxon>
        <taxon>Ascomycota</taxon>
        <taxon>Saccharomycotina</taxon>
        <taxon>Pichiomycetes</taxon>
        <taxon>Pichiales</taxon>
        <taxon>Pichiaceae</taxon>
        <taxon>Komagataella</taxon>
    </lineage>
</organism>
<comment type="function">
    <text evidence="1">Plasma membrane osmosensor that activates the high osmolarity glycerol (HOG) MAPK signaling pathway in response to high osmolarity.</text>
</comment>
<comment type="subunit">
    <text evidence="1">Forms homooligomers.</text>
</comment>
<comment type="subcellular location">
    <subcellularLocation>
        <location evidence="1">Cell membrane</location>
        <topology evidence="1">Multi-pass membrane protein</topology>
    </subcellularLocation>
</comment>
<comment type="similarity">
    <text evidence="4">Belongs to the SHO1 family.</text>
</comment>
<keyword id="KW-1003">Cell membrane</keyword>
<keyword id="KW-0325">Glycoprotein</keyword>
<keyword id="KW-0472">Membrane</keyword>
<keyword id="KW-1185">Reference proteome</keyword>
<keyword id="KW-0728">SH3 domain</keyword>
<keyword id="KW-0346">Stress response</keyword>
<keyword id="KW-0812">Transmembrane</keyword>
<keyword id="KW-1133">Transmembrane helix</keyword>
<sequence length="273" mass="30060">MSCSFQLSLVPSPPNLKMSIRNIINDPFATGSLSLAAMSWIITFISSIVADVQGSFPKLTWWGIVFELFVILFLAVLYIVDDIQPHRLSIVGFLAIATVYTTNSANSLVYSNTSAKNCAAAGSILLSMINLIWLFYYGTDIANSVLVARVFGKQGSNPFTTPQPNRTYTPNDINNTNTNYMSSGQLTGLEKGVDSNAYGNHDDSDDELSADDHYPITVRALYNYDANPEDINELSLKQGEVFKVKDTAGKWWQAKKQSGELGICPSNYVETLH</sequence>
<dbReference type="EMBL" id="FN392319">
    <property type="protein sequence ID" value="CAY67209.1"/>
    <property type="molecule type" value="Genomic_DNA"/>
</dbReference>
<dbReference type="RefSeq" id="XP_002489490.1">
    <property type="nucleotide sequence ID" value="XM_002489445.1"/>
</dbReference>
<dbReference type="SMR" id="C4QVD6"/>
<dbReference type="FunCoup" id="C4QVD6">
    <property type="interactions" value="174"/>
</dbReference>
<dbReference type="STRING" id="644223.C4QVD6"/>
<dbReference type="GlyCosmos" id="C4QVD6">
    <property type="glycosylation" value="1 site, No reported glycans"/>
</dbReference>
<dbReference type="EnsemblFungi" id="CAY67209">
    <property type="protein sequence ID" value="CAY67209"/>
    <property type="gene ID" value="PAS_chr1-3_0149"/>
</dbReference>
<dbReference type="GeneID" id="8197616"/>
<dbReference type="KEGG" id="ppa:PAS_chr1-3_0149"/>
<dbReference type="eggNOG" id="ENOG502QW7A">
    <property type="taxonomic scope" value="Eukaryota"/>
</dbReference>
<dbReference type="HOGENOM" id="CLU_043316_1_0_1"/>
<dbReference type="InParanoid" id="C4QVD6"/>
<dbReference type="OMA" id="KNGKWWQ"/>
<dbReference type="OrthoDB" id="5983572at2759"/>
<dbReference type="Proteomes" id="UP000000314">
    <property type="component" value="Chromosome 1"/>
</dbReference>
<dbReference type="GO" id="GO:0005886">
    <property type="term" value="C:plasma membrane"/>
    <property type="evidence" value="ECO:0007669"/>
    <property type="project" value="UniProtKB-SubCell"/>
</dbReference>
<dbReference type="GO" id="GO:0030833">
    <property type="term" value="P:regulation of actin filament polymerization"/>
    <property type="evidence" value="ECO:0007669"/>
    <property type="project" value="TreeGrafter"/>
</dbReference>
<dbReference type="CDD" id="cd11855">
    <property type="entry name" value="SH3_Sho1p"/>
    <property type="match status" value="1"/>
</dbReference>
<dbReference type="Gene3D" id="2.30.30.40">
    <property type="entry name" value="SH3 Domains"/>
    <property type="match status" value="1"/>
</dbReference>
<dbReference type="InterPro" id="IPR036028">
    <property type="entry name" value="SH3-like_dom_sf"/>
</dbReference>
<dbReference type="InterPro" id="IPR001452">
    <property type="entry name" value="SH3_domain"/>
</dbReference>
<dbReference type="InterPro" id="IPR035522">
    <property type="entry name" value="Sho1_SH3"/>
</dbReference>
<dbReference type="PANTHER" id="PTHR15735">
    <property type="entry name" value="FCH AND DOUBLE SH3 DOMAINS PROTEIN"/>
    <property type="match status" value="1"/>
</dbReference>
<dbReference type="PANTHER" id="PTHR15735:SF20">
    <property type="entry name" value="HIGH OSMOLARITY SIGNALING PROTEIN SHO1"/>
    <property type="match status" value="1"/>
</dbReference>
<dbReference type="Pfam" id="PF00018">
    <property type="entry name" value="SH3_1"/>
    <property type="match status" value="1"/>
</dbReference>
<dbReference type="PRINTS" id="PR00452">
    <property type="entry name" value="SH3DOMAIN"/>
</dbReference>
<dbReference type="SMART" id="SM00326">
    <property type="entry name" value="SH3"/>
    <property type="match status" value="1"/>
</dbReference>
<dbReference type="SUPFAM" id="SSF50044">
    <property type="entry name" value="SH3-domain"/>
    <property type="match status" value="1"/>
</dbReference>
<dbReference type="PROSITE" id="PS50002">
    <property type="entry name" value="SH3"/>
    <property type="match status" value="1"/>
</dbReference>
<reference key="1">
    <citation type="journal article" date="2009" name="Nat. Biotechnol.">
        <title>Genome sequence of the recombinant protein production host Pichia pastoris.</title>
        <authorList>
            <person name="De Schutter K."/>
            <person name="Lin Y.-C."/>
            <person name="Tiels P."/>
            <person name="Van Hecke A."/>
            <person name="Glinka S."/>
            <person name="Weber-Lehmann J."/>
            <person name="Rouze P."/>
            <person name="Van de Peer Y."/>
            <person name="Callewaert N."/>
        </authorList>
    </citation>
    <scope>NUCLEOTIDE SEQUENCE [LARGE SCALE GENOMIC DNA]</scope>
    <source>
        <strain>GS115 / ATCC 20864</strain>
    </source>
</reference>